<feature type="chain" id="PRO_0000460421" description="Subtelomeric hrmA-associated cluster protein AFUA_5G14890">
    <location>
        <begin position="1"/>
        <end position="132"/>
    </location>
</feature>
<organism>
    <name type="scientific">Aspergillus fumigatus (strain ATCC MYA-4609 / CBS 101355 / FGSC A1100 / Af293)</name>
    <name type="common">Neosartorya fumigata</name>
    <dbReference type="NCBI Taxonomy" id="330879"/>
    <lineage>
        <taxon>Eukaryota</taxon>
        <taxon>Fungi</taxon>
        <taxon>Dikarya</taxon>
        <taxon>Ascomycota</taxon>
        <taxon>Pezizomycotina</taxon>
        <taxon>Eurotiomycetes</taxon>
        <taxon>Eurotiomycetidae</taxon>
        <taxon>Eurotiales</taxon>
        <taxon>Aspergillaceae</taxon>
        <taxon>Aspergillus</taxon>
        <taxon>Aspergillus subgen. Fumigati</taxon>
    </lineage>
</organism>
<dbReference type="EMBL" id="AAHF01000003">
    <property type="protein sequence ID" value="EAL91130.1"/>
    <property type="molecule type" value="Genomic_DNA"/>
</dbReference>
<dbReference type="RefSeq" id="XP_753168.1">
    <property type="nucleotide sequence ID" value="XM_748075.1"/>
</dbReference>
<dbReference type="EnsemblFungi" id="EAL91130">
    <property type="protein sequence ID" value="EAL91130"/>
    <property type="gene ID" value="AFUA_5G14890"/>
</dbReference>
<dbReference type="GeneID" id="3510951"/>
<dbReference type="KEGG" id="afm:AFUA_5G14890"/>
<dbReference type="VEuPathDB" id="FungiDB:Afu5g14890"/>
<dbReference type="eggNOG" id="ENOG502T6FY">
    <property type="taxonomic scope" value="Eukaryota"/>
</dbReference>
<dbReference type="HOGENOM" id="CLU_1916590_0_0_1"/>
<dbReference type="InParanoid" id="Q4WW96"/>
<dbReference type="OMA" id="IKNWIRK"/>
<dbReference type="OrthoDB" id="2787676at2759"/>
<dbReference type="Proteomes" id="UP000002530">
    <property type="component" value="Chromosome 5"/>
</dbReference>
<dbReference type="GO" id="GO:0007155">
    <property type="term" value="P:cell adhesion"/>
    <property type="evidence" value="ECO:0007669"/>
    <property type="project" value="UniProtKB-KW"/>
</dbReference>
<name>HAC4_ASPFU</name>
<protein>
    <recommendedName>
        <fullName evidence="2">Subtelomeric hrmA-associated cluster protein AFUA_5G14890</fullName>
    </recommendedName>
</protein>
<gene>
    <name type="ORF">AFUA_5G14890</name>
</gene>
<accession>Q4WW96</accession>
<proteinExistence type="evidence at transcript level"/>
<reference key="1">
    <citation type="journal article" date="2005" name="Nature">
        <title>Genomic sequence of the pathogenic and allergenic filamentous fungus Aspergillus fumigatus.</title>
        <authorList>
            <person name="Nierman W.C."/>
            <person name="Pain A."/>
            <person name="Anderson M.J."/>
            <person name="Wortman J.R."/>
            <person name="Kim H.S."/>
            <person name="Arroyo J."/>
            <person name="Berriman M."/>
            <person name="Abe K."/>
            <person name="Archer D.B."/>
            <person name="Bermejo C."/>
            <person name="Bennett J.W."/>
            <person name="Bowyer P."/>
            <person name="Chen D."/>
            <person name="Collins M."/>
            <person name="Coulsen R."/>
            <person name="Davies R."/>
            <person name="Dyer P.S."/>
            <person name="Farman M.L."/>
            <person name="Fedorova N."/>
            <person name="Fedorova N.D."/>
            <person name="Feldblyum T.V."/>
            <person name="Fischer R."/>
            <person name="Fosker N."/>
            <person name="Fraser A."/>
            <person name="Garcia J.L."/>
            <person name="Garcia M.J."/>
            <person name="Goble A."/>
            <person name="Goldman G.H."/>
            <person name="Gomi K."/>
            <person name="Griffith-Jones S."/>
            <person name="Gwilliam R."/>
            <person name="Haas B.J."/>
            <person name="Haas H."/>
            <person name="Harris D.E."/>
            <person name="Horiuchi H."/>
            <person name="Huang J."/>
            <person name="Humphray S."/>
            <person name="Jimenez J."/>
            <person name="Keller N."/>
            <person name="Khouri H."/>
            <person name="Kitamoto K."/>
            <person name="Kobayashi T."/>
            <person name="Konzack S."/>
            <person name="Kulkarni R."/>
            <person name="Kumagai T."/>
            <person name="Lafton A."/>
            <person name="Latge J.-P."/>
            <person name="Li W."/>
            <person name="Lord A."/>
            <person name="Lu C."/>
            <person name="Majoros W.H."/>
            <person name="May G.S."/>
            <person name="Miller B.L."/>
            <person name="Mohamoud Y."/>
            <person name="Molina M."/>
            <person name="Monod M."/>
            <person name="Mouyna I."/>
            <person name="Mulligan S."/>
            <person name="Murphy L.D."/>
            <person name="O'Neil S."/>
            <person name="Paulsen I."/>
            <person name="Penalva M.A."/>
            <person name="Pertea M."/>
            <person name="Price C."/>
            <person name="Pritchard B.L."/>
            <person name="Quail M.A."/>
            <person name="Rabbinowitsch E."/>
            <person name="Rawlins N."/>
            <person name="Rajandream M.A."/>
            <person name="Reichard U."/>
            <person name="Renauld H."/>
            <person name="Robson G.D."/>
            <person name="Rodriguez de Cordoba S."/>
            <person name="Rodriguez-Pena J.M."/>
            <person name="Ronning C.M."/>
            <person name="Rutter S."/>
            <person name="Salzberg S.L."/>
            <person name="Sanchez M."/>
            <person name="Sanchez-Ferrero J.C."/>
            <person name="Saunders D."/>
            <person name="Seeger K."/>
            <person name="Squares R."/>
            <person name="Squares S."/>
            <person name="Takeuchi M."/>
            <person name="Tekaia F."/>
            <person name="Turner G."/>
            <person name="Vazquez de Aldana C.R."/>
            <person name="Weidman J."/>
            <person name="White O."/>
            <person name="Woodward J.R."/>
            <person name="Yu J.-H."/>
            <person name="Fraser C.M."/>
            <person name="Galagan J.E."/>
            <person name="Asai K."/>
            <person name="Machida M."/>
            <person name="Hall N."/>
            <person name="Barrell B.G."/>
            <person name="Denning D.W."/>
        </authorList>
    </citation>
    <scope>NUCLEOTIDE SEQUENCE [LARGE SCALE GENOMIC DNA]</scope>
    <source>
        <strain>ATCC MYA-4609 / CBS 101355 / FGSC A1100 / Af293</strain>
    </source>
</reference>
<reference key="2">
    <citation type="journal article" date="2019" name="Nat. Microbiol.">
        <title>Fungal biofilm morphology impacts hypoxia fitness and disease progression.</title>
        <authorList>
            <person name="Kowalski C.H."/>
            <person name="Kerkaert J.D."/>
            <person name="Liu K.W."/>
            <person name="Bond M.C."/>
            <person name="Hartmann R."/>
            <person name="Nadell C.D."/>
            <person name="Stajich J.E."/>
            <person name="Cramer R.A."/>
        </authorList>
    </citation>
    <scope>FUNCTION</scope>
    <scope>INDUCTION</scope>
</reference>
<comment type="function">
    <text evidence="1">Part of the subtelomeric hrmA-associated cluster (HAC) containing genes that alter the hyphal surface (such as reduced total chitin or increased beta-glucan exposure) and perturb inter-hyphal interactions within the developing biofilms, resulting in a loss of vertically aligned polarized growing filaments (PubMed:31548684). Consequently, this hypoxia-typic morphotype (called H-MORPH) with altered biofilm architecture leads to increased hypoxia fitness, increased host inflammation, rapid disease progression, and mortality in a murine model of invasive aspergillosis (PubMed:31548684).</text>
</comment>
<comment type="induction">
    <text evidence="1">Expression is regulated by the hypoxia responsive morphology factor A (hrmA).</text>
</comment>
<sequence>MSGLKNSGKKAVDAILNPQKIDVAFQKFTRPTVAAGKTTFPTSQRDLKNIGFHFDLADHTRQVPDTRPNAKPGATRTANVFHWQAAAEAESKSIKDWIRKNGSHAVIQTLEVPVDATKEEFEDILKTAAKKL</sequence>
<keyword id="KW-0130">Cell adhesion</keyword>
<keyword id="KW-1185">Reference proteome</keyword>
<keyword id="KW-0843">Virulence</keyword>
<evidence type="ECO:0000269" key="1">
    <source>
    </source>
</evidence>
<evidence type="ECO:0000303" key="2">
    <source>
    </source>
</evidence>